<organism>
    <name type="scientific">Equus caballus</name>
    <name type="common">Horse</name>
    <dbReference type="NCBI Taxonomy" id="9796"/>
    <lineage>
        <taxon>Eukaryota</taxon>
        <taxon>Metazoa</taxon>
        <taxon>Chordata</taxon>
        <taxon>Craniata</taxon>
        <taxon>Vertebrata</taxon>
        <taxon>Euteleostomi</taxon>
        <taxon>Mammalia</taxon>
        <taxon>Eutheria</taxon>
        <taxon>Laurasiatheria</taxon>
        <taxon>Perissodactyla</taxon>
        <taxon>Equidae</taxon>
        <taxon>Equus</taxon>
    </lineage>
</organism>
<evidence type="ECO:0000250" key="1"/>
<evidence type="ECO:0000250" key="2">
    <source>
        <dbReference type="UniProtKB" id="P45452"/>
    </source>
</evidence>
<evidence type="ECO:0000255" key="3"/>
<evidence type="ECO:0000255" key="4">
    <source>
        <dbReference type="PROSITE-ProRule" id="PRU10095"/>
    </source>
</evidence>
<evidence type="ECO:0000305" key="5"/>
<proteinExistence type="evidence at transcript level"/>
<feature type="signal peptide" evidence="3">
    <location>
        <begin position="1"/>
        <end position="19"/>
    </location>
</feature>
<feature type="propeptide" id="PRO_0000028786" description="Activation peptide" evidence="3">
    <location>
        <begin position="20"/>
        <end position="104"/>
    </location>
</feature>
<feature type="chain" id="PRO_0000028787" description="Collagenase 3">
    <location>
        <begin position="105"/>
        <end position="472"/>
    </location>
</feature>
<feature type="repeat" description="Hemopexin 1">
    <location>
        <begin position="282"/>
        <end position="331"/>
    </location>
</feature>
<feature type="repeat" description="Hemopexin 2">
    <location>
        <begin position="332"/>
        <end position="378"/>
    </location>
</feature>
<feature type="repeat" description="Hemopexin 3">
    <location>
        <begin position="380"/>
        <end position="428"/>
    </location>
</feature>
<feature type="repeat" description="Hemopexin 4">
    <location>
        <begin position="429"/>
        <end position="472"/>
    </location>
</feature>
<feature type="region of interest" description="Interaction with TIMP2" evidence="1">
    <location>
        <begin position="177"/>
        <end position="247"/>
    </location>
</feature>
<feature type="region of interest" description="Interaction with collagen" evidence="1">
    <location>
        <begin position="269"/>
        <end position="472"/>
    </location>
</feature>
<feature type="short sequence motif" description="Cysteine switch" evidence="1">
    <location>
        <begin position="95"/>
        <end position="102"/>
    </location>
</feature>
<feature type="active site" evidence="4">
    <location>
        <position position="224"/>
    </location>
</feature>
<feature type="binding site" description="in inhibited form" evidence="1">
    <location>
        <position position="97"/>
    </location>
    <ligand>
        <name>Zn(2+)</name>
        <dbReference type="ChEBI" id="CHEBI:29105"/>
        <label>2</label>
        <note>catalytic</note>
    </ligand>
</feature>
<feature type="binding site" evidence="1">
    <location>
        <position position="129"/>
    </location>
    <ligand>
        <name>Ca(2+)</name>
        <dbReference type="ChEBI" id="CHEBI:29108"/>
        <label>1</label>
    </ligand>
</feature>
<feature type="binding site" evidence="1">
    <location>
        <position position="163"/>
    </location>
    <ligand>
        <name>Ca(2+)</name>
        <dbReference type="ChEBI" id="CHEBI:29108"/>
        <label>2</label>
    </ligand>
</feature>
<feature type="binding site" evidence="1">
    <location>
        <position position="173"/>
    </location>
    <ligand>
        <name>Zn(2+)</name>
        <dbReference type="ChEBI" id="CHEBI:29105"/>
        <label>1</label>
    </ligand>
</feature>
<feature type="binding site" evidence="1">
    <location>
        <position position="175"/>
    </location>
    <ligand>
        <name>Zn(2+)</name>
        <dbReference type="ChEBI" id="CHEBI:29105"/>
        <label>1</label>
    </ligand>
</feature>
<feature type="binding site" evidence="1">
    <location>
        <position position="180"/>
    </location>
    <ligand>
        <name>Ca(2+)</name>
        <dbReference type="ChEBI" id="CHEBI:29108"/>
        <label>3</label>
    </ligand>
</feature>
<feature type="binding site" evidence="1">
    <location>
        <position position="181"/>
    </location>
    <ligand>
        <name>Ca(2+)</name>
        <dbReference type="ChEBI" id="CHEBI:29108"/>
        <label>3</label>
    </ligand>
</feature>
<feature type="binding site" evidence="1">
    <location>
        <position position="183"/>
    </location>
    <ligand>
        <name>Ca(2+)</name>
        <dbReference type="ChEBI" id="CHEBI:29108"/>
        <label>3</label>
    </ligand>
</feature>
<feature type="binding site" evidence="1">
    <location>
        <position position="185"/>
    </location>
    <ligand>
        <name>Ca(2+)</name>
        <dbReference type="ChEBI" id="CHEBI:29108"/>
        <label>3</label>
    </ligand>
</feature>
<feature type="binding site" evidence="1">
    <location>
        <position position="188"/>
    </location>
    <ligand>
        <name>Zn(2+)</name>
        <dbReference type="ChEBI" id="CHEBI:29105"/>
        <label>1</label>
    </ligand>
</feature>
<feature type="binding site" evidence="1">
    <location>
        <position position="195"/>
    </location>
    <ligand>
        <name>Ca(2+)</name>
        <dbReference type="ChEBI" id="CHEBI:29108"/>
        <label>2</label>
    </ligand>
</feature>
<feature type="binding site" evidence="1">
    <location>
        <position position="197"/>
    </location>
    <ligand>
        <name>Ca(2+)</name>
        <dbReference type="ChEBI" id="CHEBI:29108"/>
        <label>2</label>
    </ligand>
</feature>
<feature type="binding site" evidence="1">
    <location>
        <position position="199"/>
    </location>
    <ligand>
        <name>Ca(2+)</name>
        <dbReference type="ChEBI" id="CHEBI:29108"/>
        <label>2</label>
    </ligand>
</feature>
<feature type="binding site" evidence="1">
    <location>
        <position position="201"/>
    </location>
    <ligand>
        <name>Zn(2+)</name>
        <dbReference type="ChEBI" id="CHEBI:29105"/>
        <label>1</label>
    </ligand>
</feature>
<feature type="binding site" evidence="1">
    <location>
        <position position="203"/>
    </location>
    <ligand>
        <name>Ca(2+)</name>
        <dbReference type="ChEBI" id="CHEBI:29108"/>
        <label>3</label>
    </ligand>
</feature>
<feature type="binding site" evidence="1">
    <location>
        <position position="204"/>
    </location>
    <ligand>
        <name>Ca(2+)</name>
        <dbReference type="ChEBI" id="CHEBI:29108"/>
        <label>1</label>
    </ligand>
</feature>
<feature type="binding site" evidence="1">
    <location>
        <position position="206"/>
    </location>
    <ligand>
        <name>Ca(2+)</name>
        <dbReference type="ChEBI" id="CHEBI:29108"/>
        <label>1</label>
    </ligand>
</feature>
<feature type="binding site" evidence="1">
    <location>
        <position position="206"/>
    </location>
    <ligand>
        <name>Ca(2+)</name>
        <dbReference type="ChEBI" id="CHEBI:29108"/>
        <label>3</label>
    </ligand>
</feature>
<feature type="binding site" evidence="1">
    <location>
        <position position="223"/>
    </location>
    <ligand>
        <name>Zn(2+)</name>
        <dbReference type="ChEBI" id="CHEBI:29105"/>
        <label>2</label>
        <note>catalytic</note>
    </ligand>
</feature>
<feature type="binding site" evidence="1">
    <location>
        <position position="227"/>
    </location>
    <ligand>
        <name>Zn(2+)</name>
        <dbReference type="ChEBI" id="CHEBI:29105"/>
        <label>2</label>
        <note>catalytic</note>
    </ligand>
</feature>
<feature type="binding site" evidence="1">
    <location>
        <position position="233"/>
    </location>
    <ligand>
        <name>Zn(2+)</name>
        <dbReference type="ChEBI" id="CHEBI:29105"/>
        <label>2</label>
        <note>catalytic</note>
    </ligand>
</feature>
<feature type="binding site" evidence="1">
    <location>
        <position position="241"/>
    </location>
    <ligand>
        <name>Zn(2+)</name>
        <dbReference type="ChEBI" id="CHEBI:29105"/>
        <label>2</label>
        <note>catalytic</note>
    </ligand>
</feature>
<feature type="binding site" evidence="1">
    <location>
        <position position="292"/>
    </location>
    <ligand>
        <name>Ca(2+)</name>
        <dbReference type="ChEBI" id="CHEBI:29108"/>
        <label>4</label>
    </ligand>
</feature>
<feature type="binding site" evidence="1">
    <location>
        <position position="294"/>
    </location>
    <ligand>
        <name>Ca(2+)</name>
        <dbReference type="ChEBI" id="CHEBI:29108"/>
        <label>5</label>
    </ligand>
</feature>
<feature type="binding site" evidence="1">
    <location>
        <position position="336"/>
    </location>
    <ligand>
        <name>Ca(2+)</name>
        <dbReference type="ChEBI" id="CHEBI:29108"/>
        <label>4</label>
    </ligand>
</feature>
<feature type="binding site" evidence="1">
    <location>
        <position position="338"/>
    </location>
    <ligand>
        <name>Ca(2+)</name>
        <dbReference type="ChEBI" id="CHEBI:29108"/>
        <label>5</label>
    </ligand>
</feature>
<feature type="binding site" evidence="1">
    <location>
        <position position="384"/>
    </location>
    <ligand>
        <name>Ca(2+)</name>
        <dbReference type="ChEBI" id="CHEBI:29108"/>
        <label>4</label>
    </ligand>
</feature>
<feature type="binding site" evidence="1">
    <location>
        <position position="386"/>
    </location>
    <ligand>
        <name>Ca(2+)</name>
        <dbReference type="ChEBI" id="CHEBI:29108"/>
        <label>5</label>
    </ligand>
</feature>
<feature type="binding site" evidence="1">
    <location>
        <position position="433"/>
    </location>
    <ligand>
        <name>Ca(2+)</name>
        <dbReference type="ChEBI" id="CHEBI:29108"/>
        <label>4</label>
    </ligand>
</feature>
<feature type="binding site" evidence="1">
    <location>
        <position position="435"/>
    </location>
    <ligand>
        <name>Ca(2+)</name>
        <dbReference type="ChEBI" id="CHEBI:29108"/>
        <label>5</label>
    </ligand>
</feature>
<feature type="modified residue" description="Phosphotyrosine; by PKDCC" evidence="2">
    <location>
        <position position="367"/>
    </location>
</feature>
<feature type="glycosylation site" description="N-linked (GlcNAc...) asparagine" evidence="3">
    <location>
        <position position="118"/>
    </location>
</feature>
<feature type="glycosylation site" description="N-linked (GlcNAc...) asparagine" evidence="3">
    <location>
        <position position="153"/>
    </location>
</feature>
<feature type="glycosylation site" description="N-linked (GlcNAc...) asparagine" evidence="3">
    <location>
        <position position="159"/>
    </location>
</feature>
<feature type="disulfide bond" evidence="1">
    <location>
        <begin position="285"/>
        <end position="472"/>
    </location>
</feature>
<protein>
    <recommendedName>
        <fullName>Collagenase 3</fullName>
        <ecNumber>3.4.24.-</ecNumber>
    </recommendedName>
    <alternativeName>
        <fullName>Matrix metalloproteinase-13</fullName>
        <shortName>MMP-13</shortName>
    </alternativeName>
</protein>
<keyword id="KW-0106">Calcium</keyword>
<keyword id="KW-0177">Collagen degradation</keyword>
<keyword id="KW-1015">Disulfide bond</keyword>
<keyword id="KW-0272">Extracellular matrix</keyword>
<keyword id="KW-0325">Glycoprotein</keyword>
<keyword id="KW-0378">Hydrolase</keyword>
<keyword id="KW-0479">Metal-binding</keyword>
<keyword id="KW-0482">Metalloprotease</keyword>
<keyword id="KW-0597">Phosphoprotein</keyword>
<keyword id="KW-0645">Protease</keyword>
<keyword id="KW-1185">Reference proteome</keyword>
<keyword id="KW-0677">Repeat</keyword>
<keyword id="KW-0964">Secreted</keyword>
<keyword id="KW-0732">Signal</keyword>
<keyword id="KW-0862">Zinc</keyword>
<keyword id="KW-0865">Zymogen</keyword>
<name>MMP13_HORSE</name>
<reference key="1">
    <citation type="submission" date="1997-11" db="EMBL/GenBank/DDBJ databases">
        <title>Dose dependent effects of corticosteroids on the expression of matrix related genes in equine articular chondrocytes.</title>
        <authorList>
            <person name="Richardson D.W."/>
        </authorList>
    </citation>
    <scope>NUCLEOTIDE SEQUENCE [MRNA]</scope>
</reference>
<sequence>MHPGVLAAFLFLSWTRCWSLPVPNDDDDDDDMSEEDFQLAERYLKSYYYPLNPAGILKKTAANSVVDRLREMQSFFGLEVTGKLDDNTLDIMKKPRCGVPDVGEYNVFPRTLKWPKMNLTYRIVNYTPDLTHSEVEKAFKKAFKVWSDVTPLNFTRLYNGTADIMISFGTKEHGDFYPFDGPSGLLAHAFPPGPNYGGDAHFDDDETWTSSSKGYNLFLVAAHEFGHSLGLDHSKDPGALMFPIYTYTGKSHFVLPDDDVQGIQYLYGPGDEDPNPKHPKTPDKCDPSLSLDAITSLRGETMVFKDRFFWRLHPQLVDAELFLTKSFWPELPNRIDAAYEHPSKDLIFIFRGRKFWALNGYDILEGYPQKISELGFPKDVKKISAAVHFEDTGKTLFFSGNQVWRYDDTNRMMDKDYPRLIEEDFPGIGDKVDAVYEKNGYIYFFNGPIQFEYSIWSNRIVRVMPTNSLLWC</sequence>
<gene>
    <name type="primary">MMP13</name>
</gene>
<comment type="function">
    <text evidence="1">Plays a role in the degradation of extracellular matrix proteins including fibrillar collagen, fibronectin, TNC and ACAN. Cleaves triple helical collagens, including type I, type II and type III collagen, but has the highest activity with soluble type II collagen. Can also degrade collagen type IV, type XIV and type X. May also function by activating or degrading key regulatory proteins, such as TGFB1 and CCN2. Plays a role in wound healing, tissue remodeling, cartilage degradation, bone development, bone mineralization and ossification. Required for normal embryonic bone development and ossification. Plays a role in the healing of bone fractures via endochondral ossification. Plays a role in wound healing, probably by a mechanism that involves proteolytic activation of TGFB1 and degradation of CCN2. Plays a role in keratinocyte migration during wound healing. May play a role in cell migration and in tumor cell invasion (By similarity).</text>
</comment>
<comment type="cofactor">
    <cofactor evidence="1">
        <name>Ca(2+)</name>
        <dbReference type="ChEBI" id="CHEBI:29108"/>
    </cofactor>
    <text evidence="1">Can bind about 5 Ca(2+) ions per subunit.</text>
</comment>
<comment type="cofactor">
    <cofactor evidence="1">
        <name>Zn(2+)</name>
        <dbReference type="ChEBI" id="CHEBI:29105"/>
    </cofactor>
    <text evidence="1">Binds 2 Zn(2+) ions per subunit.</text>
</comment>
<comment type="subcellular location">
    <subcellularLocation>
        <location evidence="5">Secreted</location>
        <location evidence="5">Extracellular space</location>
        <location evidence="5">Extracellular matrix</location>
    </subcellularLocation>
    <subcellularLocation>
        <location evidence="1">Secreted</location>
    </subcellularLocation>
</comment>
<comment type="tissue specificity">
    <text>Seems to be specific to breast carcinomas.</text>
</comment>
<comment type="domain">
    <text evidence="1">The C-terminal region binds to collagen.</text>
</comment>
<comment type="domain">
    <text evidence="1">The conserved cysteine present in the cysteine-switch motif binds the catalytic zinc ion, thus inhibiting the enzyme. The dissociation of the cysteine from the zinc ion upon the activation-peptide release activates the enzyme (By similarity).</text>
</comment>
<comment type="PTM">
    <text evidence="1">The proenzyme is activated by removal of the propeptide; this cleavage can be effected by other matrix metalloproteinases, such as MMP2, MMP3 and MMP14 and may involve several cleavage steps. Cleavage can also be autocatalytic, after partial maturation by another protease or after treatment with 4-aminophenylmercuric acetate (APMA) (in vitro) (By similarity).</text>
</comment>
<comment type="PTM">
    <text evidence="1">N-glycosylated.</text>
</comment>
<comment type="PTM">
    <text evidence="2">Tyrosine phosphorylated by PKDCC/VLK.</text>
</comment>
<comment type="similarity">
    <text evidence="5">Belongs to the peptidase M10A family.</text>
</comment>
<dbReference type="EC" id="3.4.24.-"/>
<dbReference type="EMBL" id="AF034087">
    <property type="protein sequence ID" value="AAB86893.1"/>
    <property type="molecule type" value="mRNA"/>
</dbReference>
<dbReference type="RefSeq" id="NP_001075273.1">
    <property type="nucleotide sequence ID" value="NM_001081804.1"/>
</dbReference>
<dbReference type="SMR" id="O18927"/>
<dbReference type="FunCoup" id="O18927">
    <property type="interactions" value="83"/>
</dbReference>
<dbReference type="STRING" id="9796.ENSECAP00000005084"/>
<dbReference type="MEROPS" id="M10.013"/>
<dbReference type="GlyCosmos" id="O18927">
    <property type="glycosylation" value="3 sites, No reported glycans"/>
</dbReference>
<dbReference type="PaxDb" id="9796-ENSECAP00000005084"/>
<dbReference type="GeneID" id="100009711"/>
<dbReference type="KEGG" id="ecb:100009711"/>
<dbReference type="CTD" id="4322"/>
<dbReference type="InParanoid" id="O18927"/>
<dbReference type="OrthoDB" id="406838at2759"/>
<dbReference type="BRENDA" id="3.4.24.B4">
    <property type="organism ID" value="2120"/>
</dbReference>
<dbReference type="Proteomes" id="UP000002281">
    <property type="component" value="Unplaced"/>
</dbReference>
<dbReference type="GO" id="GO:0031012">
    <property type="term" value="C:extracellular matrix"/>
    <property type="evidence" value="ECO:0007669"/>
    <property type="project" value="InterPro"/>
</dbReference>
<dbReference type="GO" id="GO:0005615">
    <property type="term" value="C:extracellular space"/>
    <property type="evidence" value="ECO:0000318"/>
    <property type="project" value="GO_Central"/>
</dbReference>
<dbReference type="GO" id="GO:0005509">
    <property type="term" value="F:calcium ion binding"/>
    <property type="evidence" value="ECO:0000250"/>
    <property type="project" value="UniProtKB"/>
</dbReference>
<dbReference type="GO" id="GO:0005518">
    <property type="term" value="F:collagen binding"/>
    <property type="evidence" value="ECO:0000250"/>
    <property type="project" value="UniProtKB"/>
</dbReference>
<dbReference type="GO" id="GO:0004175">
    <property type="term" value="F:endopeptidase activity"/>
    <property type="evidence" value="ECO:0000250"/>
    <property type="project" value="UniProtKB"/>
</dbReference>
<dbReference type="GO" id="GO:0004222">
    <property type="term" value="F:metalloendopeptidase activity"/>
    <property type="evidence" value="ECO:0000250"/>
    <property type="project" value="UniProtKB"/>
</dbReference>
<dbReference type="GO" id="GO:0008270">
    <property type="term" value="F:zinc ion binding"/>
    <property type="evidence" value="ECO:0000250"/>
    <property type="project" value="UniProtKB"/>
</dbReference>
<dbReference type="GO" id="GO:0060349">
    <property type="term" value="P:bone morphogenesis"/>
    <property type="evidence" value="ECO:0000250"/>
    <property type="project" value="UniProtKB"/>
</dbReference>
<dbReference type="GO" id="GO:0030574">
    <property type="term" value="P:collagen catabolic process"/>
    <property type="evidence" value="ECO:0000250"/>
    <property type="project" value="UniProtKB"/>
</dbReference>
<dbReference type="GO" id="GO:0022617">
    <property type="term" value="P:extracellular matrix disassembly"/>
    <property type="evidence" value="ECO:0000250"/>
    <property type="project" value="UniProtKB"/>
</dbReference>
<dbReference type="GO" id="GO:0030198">
    <property type="term" value="P:extracellular matrix organization"/>
    <property type="evidence" value="ECO:0000318"/>
    <property type="project" value="GO_Central"/>
</dbReference>
<dbReference type="GO" id="GO:0006508">
    <property type="term" value="P:proteolysis"/>
    <property type="evidence" value="ECO:0007669"/>
    <property type="project" value="UniProtKB-KW"/>
</dbReference>
<dbReference type="CDD" id="cd00094">
    <property type="entry name" value="HX"/>
    <property type="match status" value="1"/>
</dbReference>
<dbReference type="CDD" id="cd04278">
    <property type="entry name" value="ZnMc_MMP"/>
    <property type="match status" value="1"/>
</dbReference>
<dbReference type="FunFam" id="3.40.390.10:FF:000007">
    <property type="entry name" value="Collagenase 3"/>
    <property type="match status" value="1"/>
</dbReference>
<dbReference type="FunFam" id="2.110.10.10:FF:000002">
    <property type="entry name" value="Matrix metallopeptidase 3"/>
    <property type="match status" value="1"/>
</dbReference>
<dbReference type="Gene3D" id="3.40.390.10">
    <property type="entry name" value="Collagenase (Catalytic Domain)"/>
    <property type="match status" value="1"/>
</dbReference>
<dbReference type="Gene3D" id="2.110.10.10">
    <property type="entry name" value="Hemopexin-like domain"/>
    <property type="match status" value="1"/>
</dbReference>
<dbReference type="InterPro" id="IPR000585">
    <property type="entry name" value="Hemopexin-like_dom"/>
</dbReference>
<dbReference type="InterPro" id="IPR036375">
    <property type="entry name" value="Hemopexin-like_dom_sf"/>
</dbReference>
<dbReference type="InterPro" id="IPR018487">
    <property type="entry name" value="Hemopexin-like_repeat"/>
</dbReference>
<dbReference type="InterPro" id="IPR018486">
    <property type="entry name" value="Hemopexin_CS"/>
</dbReference>
<dbReference type="InterPro" id="IPR033739">
    <property type="entry name" value="M10A_MMP"/>
</dbReference>
<dbReference type="InterPro" id="IPR024079">
    <property type="entry name" value="MetalloPept_cat_dom_sf"/>
</dbReference>
<dbReference type="InterPro" id="IPR001818">
    <property type="entry name" value="Pept_M10_metallopeptidase"/>
</dbReference>
<dbReference type="InterPro" id="IPR021190">
    <property type="entry name" value="Pept_M10A"/>
</dbReference>
<dbReference type="InterPro" id="IPR021158">
    <property type="entry name" value="Pept_M10A_Zn_BS"/>
</dbReference>
<dbReference type="InterPro" id="IPR006026">
    <property type="entry name" value="Peptidase_Metallo"/>
</dbReference>
<dbReference type="InterPro" id="IPR002477">
    <property type="entry name" value="Peptidoglycan-bd-like"/>
</dbReference>
<dbReference type="InterPro" id="IPR036365">
    <property type="entry name" value="PGBD-like_sf"/>
</dbReference>
<dbReference type="PANTHER" id="PTHR10201:SF165">
    <property type="entry name" value="COLLAGENASE 3"/>
    <property type="match status" value="1"/>
</dbReference>
<dbReference type="PANTHER" id="PTHR10201">
    <property type="entry name" value="MATRIX METALLOPROTEINASE"/>
    <property type="match status" value="1"/>
</dbReference>
<dbReference type="Pfam" id="PF00045">
    <property type="entry name" value="Hemopexin"/>
    <property type="match status" value="4"/>
</dbReference>
<dbReference type="Pfam" id="PF00413">
    <property type="entry name" value="Peptidase_M10"/>
    <property type="match status" value="1"/>
</dbReference>
<dbReference type="Pfam" id="PF01471">
    <property type="entry name" value="PG_binding_1"/>
    <property type="match status" value="1"/>
</dbReference>
<dbReference type="PIRSF" id="PIRSF001191">
    <property type="entry name" value="Peptidase_M10A_matrix"/>
    <property type="match status" value="1"/>
</dbReference>
<dbReference type="PRINTS" id="PR00138">
    <property type="entry name" value="MATRIXIN"/>
</dbReference>
<dbReference type="SMART" id="SM00120">
    <property type="entry name" value="HX"/>
    <property type="match status" value="4"/>
</dbReference>
<dbReference type="SMART" id="SM00235">
    <property type="entry name" value="ZnMc"/>
    <property type="match status" value="1"/>
</dbReference>
<dbReference type="SUPFAM" id="SSF50923">
    <property type="entry name" value="Hemopexin-like domain"/>
    <property type="match status" value="1"/>
</dbReference>
<dbReference type="SUPFAM" id="SSF55486">
    <property type="entry name" value="Metalloproteases ('zincins'), catalytic domain"/>
    <property type="match status" value="1"/>
</dbReference>
<dbReference type="SUPFAM" id="SSF47090">
    <property type="entry name" value="PGBD-like"/>
    <property type="match status" value="1"/>
</dbReference>
<dbReference type="PROSITE" id="PS00546">
    <property type="entry name" value="CYSTEINE_SWITCH"/>
    <property type="match status" value="1"/>
</dbReference>
<dbReference type="PROSITE" id="PS00024">
    <property type="entry name" value="HEMOPEXIN"/>
    <property type="match status" value="1"/>
</dbReference>
<dbReference type="PROSITE" id="PS51642">
    <property type="entry name" value="HEMOPEXIN_2"/>
    <property type="match status" value="4"/>
</dbReference>
<dbReference type="PROSITE" id="PS00142">
    <property type="entry name" value="ZINC_PROTEASE"/>
    <property type="match status" value="1"/>
</dbReference>
<accession>O18927</accession>